<reference key="1">
    <citation type="submission" date="2006-12" db="EMBL/GenBank/DDBJ databases">
        <title>Bifidobacterium adolescentis complete genome sequence.</title>
        <authorList>
            <person name="Suzuki T."/>
            <person name="Tsuda Y."/>
            <person name="Kanou N."/>
            <person name="Inoue T."/>
            <person name="Kumazaki K."/>
            <person name="Nagano S."/>
            <person name="Hirai S."/>
            <person name="Tanaka K."/>
            <person name="Watanabe K."/>
        </authorList>
    </citation>
    <scope>NUCLEOTIDE SEQUENCE [LARGE SCALE GENOMIC DNA]</scope>
    <source>
        <strain>ATCC 15703 / DSM 20083 / NCTC 11814 / E194a</strain>
    </source>
</reference>
<accession>A1A085</accession>
<protein>
    <recommendedName>
        <fullName evidence="1">Large ribosomal subunit protein uL18</fullName>
    </recommendedName>
    <alternativeName>
        <fullName evidence="2">50S ribosomal protein L18</fullName>
    </alternativeName>
</protein>
<feature type="chain" id="PRO_1000052990" description="Large ribosomal subunit protein uL18">
    <location>
        <begin position="1"/>
        <end position="123"/>
    </location>
</feature>
<evidence type="ECO:0000255" key="1">
    <source>
        <dbReference type="HAMAP-Rule" id="MF_01337"/>
    </source>
</evidence>
<evidence type="ECO:0000305" key="2"/>
<proteinExistence type="inferred from homology"/>
<sequence length="123" mass="13117">MSVQILGKGKKVALKRRHARLRKHISGTPELPRLVVTRSNRHMVAQIIDDTKGVTLVSESTLTSDFAGFEGTKTEAAKKVGELIAKKAQDAGITAVVFDRGGNKYHGRVAAVAEGAREGGLAL</sequence>
<name>RL18_BIFAA</name>
<dbReference type="EMBL" id="AP009256">
    <property type="protein sequence ID" value="BAF39118.1"/>
    <property type="molecule type" value="Genomic_DNA"/>
</dbReference>
<dbReference type="RefSeq" id="WP_003808051.1">
    <property type="nucleotide sequence ID" value="NZ_CAXVNC010000001.1"/>
</dbReference>
<dbReference type="SMR" id="A1A085"/>
<dbReference type="STRING" id="367928.BAD_0337"/>
<dbReference type="PaxDb" id="1680-BADO_0344"/>
<dbReference type="GeneID" id="4556491"/>
<dbReference type="KEGG" id="bad:BAD_0337"/>
<dbReference type="HOGENOM" id="CLU_098841_0_1_11"/>
<dbReference type="Proteomes" id="UP000008702">
    <property type="component" value="Chromosome"/>
</dbReference>
<dbReference type="GO" id="GO:0022625">
    <property type="term" value="C:cytosolic large ribosomal subunit"/>
    <property type="evidence" value="ECO:0007669"/>
    <property type="project" value="TreeGrafter"/>
</dbReference>
<dbReference type="GO" id="GO:0008097">
    <property type="term" value="F:5S rRNA binding"/>
    <property type="evidence" value="ECO:0007669"/>
    <property type="project" value="TreeGrafter"/>
</dbReference>
<dbReference type="GO" id="GO:0003735">
    <property type="term" value="F:structural constituent of ribosome"/>
    <property type="evidence" value="ECO:0007669"/>
    <property type="project" value="InterPro"/>
</dbReference>
<dbReference type="GO" id="GO:0006412">
    <property type="term" value="P:translation"/>
    <property type="evidence" value="ECO:0007669"/>
    <property type="project" value="UniProtKB-UniRule"/>
</dbReference>
<dbReference type="CDD" id="cd00432">
    <property type="entry name" value="Ribosomal_L18_L5e"/>
    <property type="match status" value="1"/>
</dbReference>
<dbReference type="FunFam" id="3.30.420.100:FF:000001">
    <property type="entry name" value="50S ribosomal protein L18"/>
    <property type="match status" value="1"/>
</dbReference>
<dbReference type="Gene3D" id="3.30.420.100">
    <property type="match status" value="1"/>
</dbReference>
<dbReference type="HAMAP" id="MF_01337_B">
    <property type="entry name" value="Ribosomal_uL18_B"/>
    <property type="match status" value="1"/>
</dbReference>
<dbReference type="InterPro" id="IPR004389">
    <property type="entry name" value="Ribosomal_uL18_bac-type"/>
</dbReference>
<dbReference type="InterPro" id="IPR005484">
    <property type="entry name" value="Ribosomal_uL18_bac/euk"/>
</dbReference>
<dbReference type="NCBIfam" id="TIGR00060">
    <property type="entry name" value="L18_bact"/>
    <property type="match status" value="1"/>
</dbReference>
<dbReference type="PANTHER" id="PTHR12899">
    <property type="entry name" value="39S RIBOSOMAL PROTEIN L18, MITOCHONDRIAL"/>
    <property type="match status" value="1"/>
</dbReference>
<dbReference type="PANTHER" id="PTHR12899:SF3">
    <property type="entry name" value="LARGE RIBOSOMAL SUBUNIT PROTEIN UL18M"/>
    <property type="match status" value="1"/>
</dbReference>
<dbReference type="Pfam" id="PF00861">
    <property type="entry name" value="Ribosomal_L18p"/>
    <property type="match status" value="1"/>
</dbReference>
<dbReference type="SUPFAM" id="SSF53137">
    <property type="entry name" value="Translational machinery components"/>
    <property type="match status" value="1"/>
</dbReference>
<keyword id="KW-1185">Reference proteome</keyword>
<keyword id="KW-0687">Ribonucleoprotein</keyword>
<keyword id="KW-0689">Ribosomal protein</keyword>
<keyword id="KW-0694">RNA-binding</keyword>
<keyword id="KW-0699">rRNA-binding</keyword>
<gene>
    <name evidence="1" type="primary">rplR</name>
    <name type="ordered locus">BAD_0337</name>
</gene>
<organism>
    <name type="scientific">Bifidobacterium adolescentis (strain ATCC 15703 / DSM 20083 / NCTC 11814 / E194a)</name>
    <dbReference type="NCBI Taxonomy" id="367928"/>
    <lineage>
        <taxon>Bacteria</taxon>
        <taxon>Bacillati</taxon>
        <taxon>Actinomycetota</taxon>
        <taxon>Actinomycetes</taxon>
        <taxon>Bifidobacteriales</taxon>
        <taxon>Bifidobacteriaceae</taxon>
        <taxon>Bifidobacterium</taxon>
    </lineage>
</organism>
<comment type="function">
    <text evidence="1">This is one of the proteins that bind and probably mediate the attachment of the 5S RNA into the large ribosomal subunit, where it forms part of the central protuberance.</text>
</comment>
<comment type="subunit">
    <text evidence="1">Part of the 50S ribosomal subunit; part of the 5S rRNA/L5/L18/L25 subcomplex. Contacts the 5S and 23S rRNAs.</text>
</comment>
<comment type="similarity">
    <text evidence="1">Belongs to the universal ribosomal protein uL18 family.</text>
</comment>